<name>THIC_MYCBP</name>
<feature type="chain" id="PRO_1000004777" description="Phosphomethylpyrimidine synthase">
    <location>
        <begin position="1"/>
        <end position="547"/>
    </location>
</feature>
<feature type="binding site" evidence="1">
    <location>
        <position position="146"/>
    </location>
    <ligand>
        <name>substrate</name>
    </ligand>
</feature>
<feature type="binding site" evidence="1">
    <location>
        <position position="175"/>
    </location>
    <ligand>
        <name>substrate</name>
    </ligand>
</feature>
<feature type="binding site" evidence="1">
    <location>
        <position position="204"/>
    </location>
    <ligand>
        <name>substrate</name>
    </ligand>
</feature>
<feature type="binding site" evidence="1">
    <location>
        <position position="240"/>
    </location>
    <ligand>
        <name>substrate</name>
    </ligand>
</feature>
<feature type="binding site" evidence="1">
    <location>
        <begin position="260"/>
        <end position="262"/>
    </location>
    <ligand>
        <name>substrate</name>
    </ligand>
</feature>
<feature type="binding site" evidence="1">
    <location>
        <begin position="301"/>
        <end position="304"/>
    </location>
    <ligand>
        <name>substrate</name>
    </ligand>
</feature>
<feature type="binding site" evidence="1">
    <location>
        <position position="340"/>
    </location>
    <ligand>
        <name>substrate</name>
    </ligand>
</feature>
<feature type="binding site" evidence="1">
    <location>
        <position position="344"/>
    </location>
    <ligand>
        <name>Zn(2+)</name>
        <dbReference type="ChEBI" id="CHEBI:29105"/>
    </ligand>
</feature>
<feature type="binding site" evidence="1">
    <location>
        <position position="367"/>
    </location>
    <ligand>
        <name>substrate</name>
    </ligand>
</feature>
<feature type="binding site" evidence="1">
    <location>
        <position position="408"/>
    </location>
    <ligand>
        <name>Zn(2+)</name>
        <dbReference type="ChEBI" id="CHEBI:29105"/>
    </ligand>
</feature>
<feature type="binding site" evidence="1">
    <location>
        <position position="488"/>
    </location>
    <ligand>
        <name>[4Fe-4S] cluster</name>
        <dbReference type="ChEBI" id="CHEBI:49883"/>
        <note>4Fe-4S-S-AdoMet</note>
    </ligand>
</feature>
<feature type="binding site" evidence="1">
    <location>
        <position position="491"/>
    </location>
    <ligand>
        <name>[4Fe-4S] cluster</name>
        <dbReference type="ChEBI" id="CHEBI:49883"/>
        <note>4Fe-4S-S-AdoMet</note>
    </ligand>
</feature>
<feature type="binding site" evidence="1">
    <location>
        <position position="496"/>
    </location>
    <ligand>
        <name>[4Fe-4S] cluster</name>
        <dbReference type="ChEBI" id="CHEBI:49883"/>
        <note>4Fe-4S-S-AdoMet</note>
    </ligand>
</feature>
<keyword id="KW-0004">4Fe-4S</keyword>
<keyword id="KW-0408">Iron</keyword>
<keyword id="KW-0411">Iron-sulfur</keyword>
<keyword id="KW-0456">Lyase</keyword>
<keyword id="KW-0479">Metal-binding</keyword>
<keyword id="KW-0949">S-adenosyl-L-methionine</keyword>
<keyword id="KW-0784">Thiamine biosynthesis</keyword>
<keyword id="KW-0862">Zinc</keyword>
<evidence type="ECO:0000255" key="1">
    <source>
        <dbReference type="HAMAP-Rule" id="MF_00089"/>
    </source>
</evidence>
<protein>
    <recommendedName>
        <fullName evidence="1">Phosphomethylpyrimidine synthase</fullName>
        <ecNumber evidence="1">4.1.99.17</ecNumber>
    </recommendedName>
    <alternativeName>
        <fullName evidence="1">Hydroxymethylpyrimidine phosphate synthase</fullName>
        <shortName evidence="1">HMP-P synthase</shortName>
        <shortName evidence="1">HMP-phosphate synthase</shortName>
        <shortName evidence="1">HMPP synthase</shortName>
    </alternativeName>
    <alternativeName>
        <fullName evidence="1">Thiamine biosynthesis protein ThiC</fullName>
    </alternativeName>
</protein>
<gene>
    <name evidence="1" type="primary">thiC</name>
    <name type="ordered locus">BCG_0462c</name>
</gene>
<proteinExistence type="inferred from homology"/>
<reference key="1">
    <citation type="journal article" date="2007" name="Proc. Natl. Acad. Sci. U.S.A.">
        <title>Genome plasticity of BCG and impact on vaccine efficacy.</title>
        <authorList>
            <person name="Brosch R."/>
            <person name="Gordon S.V."/>
            <person name="Garnier T."/>
            <person name="Eiglmeier K."/>
            <person name="Frigui W."/>
            <person name="Valenti P."/>
            <person name="Dos Santos S."/>
            <person name="Duthoy S."/>
            <person name="Lacroix C."/>
            <person name="Garcia-Pelayo C."/>
            <person name="Inwald J.K."/>
            <person name="Golby P."/>
            <person name="Garcia J.N."/>
            <person name="Hewinson R.G."/>
            <person name="Behr M.A."/>
            <person name="Quail M.A."/>
            <person name="Churcher C."/>
            <person name="Barrell B.G."/>
            <person name="Parkhill J."/>
            <person name="Cole S.T."/>
        </authorList>
    </citation>
    <scope>NUCLEOTIDE SEQUENCE [LARGE SCALE GENOMIC DNA]</scope>
    <source>
        <strain>BCG / Pasteur 1173P2</strain>
    </source>
</reference>
<accession>A1KFP5</accession>
<comment type="function">
    <text evidence="1">Catalyzes the synthesis of the hydroxymethylpyrimidine phosphate (HMP-P) moiety of thiamine from aminoimidazole ribotide (AIR) in a radical S-adenosyl-L-methionine (SAM)-dependent reaction.</text>
</comment>
<comment type="catalytic activity">
    <reaction evidence="1">
        <text>5-amino-1-(5-phospho-beta-D-ribosyl)imidazole + S-adenosyl-L-methionine = 4-amino-2-methyl-5-(phosphooxymethyl)pyrimidine + CO + 5'-deoxyadenosine + formate + L-methionine + 3 H(+)</text>
        <dbReference type="Rhea" id="RHEA:24840"/>
        <dbReference type="ChEBI" id="CHEBI:15378"/>
        <dbReference type="ChEBI" id="CHEBI:15740"/>
        <dbReference type="ChEBI" id="CHEBI:17245"/>
        <dbReference type="ChEBI" id="CHEBI:17319"/>
        <dbReference type="ChEBI" id="CHEBI:57844"/>
        <dbReference type="ChEBI" id="CHEBI:58354"/>
        <dbReference type="ChEBI" id="CHEBI:59789"/>
        <dbReference type="ChEBI" id="CHEBI:137981"/>
        <dbReference type="EC" id="4.1.99.17"/>
    </reaction>
</comment>
<comment type="cofactor">
    <cofactor evidence="1">
        <name>[4Fe-4S] cluster</name>
        <dbReference type="ChEBI" id="CHEBI:49883"/>
    </cofactor>
    <text evidence="1">Binds 1 [4Fe-4S] cluster per subunit. The cluster is coordinated with 3 cysteines and an exchangeable S-adenosyl-L-methionine.</text>
</comment>
<comment type="pathway">
    <text evidence="1">Cofactor biosynthesis; thiamine diphosphate biosynthesis.</text>
</comment>
<comment type="similarity">
    <text evidence="1">Belongs to the ThiC family.</text>
</comment>
<sequence length="547" mass="59898">MTITVEPSVTTGPIAGSAKAYREIEAPGSGATLQVPFRRVHLSTGDHFDLYDTSGPYTDTDTVIDLTAGLPHRPGVVRDRGTQLQRARAGEITAEMAFIAAREDMSAELVRDEVARGRAVIPANHHHPESEPMIIGKAFAVKVNANIGNSAVTSSIAEEVDKMVWATRWGADTIMDLSTGKNIHETREWILRNSPVPVGTVPIYQALEKVKGDPTELTWEIYRDTVIEQCEQGVDYMTVHAGVLLRYVPLTAKRVTGIVSRGGSIMAAWCLAHHRESFLYTNFEELCDIFARYDVTFSLGDGLRPGSIADANDAAQFAELRTLGELTKIAKAHGAQVMIEGPGHIPMHKIVENVRLEEELCEEAPFYTLGPLATDIAPAYDHITSAIGAAIIAQAGTAMLCYVTPKEHLGLPDRKDVKDGVIAYKIAAHAADLAKGHPRAQERDDALSTARFEFRWNDQFALSLDPDTAREFHDETLPAEPAKTAHFCSMCGPKFCSMRITQDVREYAAEHGLETEADIEAVLAAGMAEKSREFAEHGNRVYLPITQ</sequence>
<organism>
    <name type="scientific">Mycobacterium bovis (strain BCG / Pasteur 1173P2)</name>
    <dbReference type="NCBI Taxonomy" id="410289"/>
    <lineage>
        <taxon>Bacteria</taxon>
        <taxon>Bacillati</taxon>
        <taxon>Actinomycetota</taxon>
        <taxon>Actinomycetes</taxon>
        <taxon>Mycobacteriales</taxon>
        <taxon>Mycobacteriaceae</taxon>
        <taxon>Mycobacterium</taxon>
        <taxon>Mycobacterium tuberculosis complex</taxon>
    </lineage>
</organism>
<dbReference type="EC" id="4.1.99.17" evidence="1"/>
<dbReference type="EMBL" id="AM408590">
    <property type="protein sequence ID" value="CAL70447.1"/>
    <property type="molecule type" value="Genomic_DNA"/>
</dbReference>
<dbReference type="RefSeq" id="WP_003900143.1">
    <property type="nucleotide sequence ID" value="NC_008769.1"/>
</dbReference>
<dbReference type="SMR" id="A1KFP5"/>
<dbReference type="KEGG" id="mbb:BCG_0462c"/>
<dbReference type="HOGENOM" id="CLU_013181_2_1_11"/>
<dbReference type="UniPathway" id="UPA00060"/>
<dbReference type="Proteomes" id="UP000001472">
    <property type="component" value="Chromosome"/>
</dbReference>
<dbReference type="GO" id="GO:0005829">
    <property type="term" value="C:cytosol"/>
    <property type="evidence" value="ECO:0007669"/>
    <property type="project" value="TreeGrafter"/>
</dbReference>
<dbReference type="GO" id="GO:0051539">
    <property type="term" value="F:4 iron, 4 sulfur cluster binding"/>
    <property type="evidence" value="ECO:0007669"/>
    <property type="project" value="UniProtKB-KW"/>
</dbReference>
<dbReference type="GO" id="GO:0016830">
    <property type="term" value="F:carbon-carbon lyase activity"/>
    <property type="evidence" value="ECO:0007669"/>
    <property type="project" value="InterPro"/>
</dbReference>
<dbReference type="GO" id="GO:0008270">
    <property type="term" value="F:zinc ion binding"/>
    <property type="evidence" value="ECO:0007669"/>
    <property type="project" value="UniProtKB-UniRule"/>
</dbReference>
<dbReference type="GO" id="GO:0009228">
    <property type="term" value="P:thiamine biosynthetic process"/>
    <property type="evidence" value="ECO:0007669"/>
    <property type="project" value="UniProtKB-KW"/>
</dbReference>
<dbReference type="GO" id="GO:0009229">
    <property type="term" value="P:thiamine diphosphate biosynthetic process"/>
    <property type="evidence" value="ECO:0007669"/>
    <property type="project" value="UniProtKB-UniRule"/>
</dbReference>
<dbReference type="FunFam" id="3.20.20.540:FF:000001">
    <property type="entry name" value="Phosphomethylpyrimidine synthase"/>
    <property type="match status" value="1"/>
</dbReference>
<dbReference type="Gene3D" id="6.10.250.620">
    <property type="match status" value="1"/>
</dbReference>
<dbReference type="Gene3D" id="3.20.20.540">
    <property type="entry name" value="Radical SAM ThiC family, central domain"/>
    <property type="match status" value="1"/>
</dbReference>
<dbReference type="HAMAP" id="MF_00089">
    <property type="entry name" value="ThiC"/>
    <property type="match status" value="1"/>
</dbReference>
<dbReference type="InterPro" id="IPR037509">
    <property type="entry name" value="ThiC"/>
</dbReference>
<dbReference type="InterPro" id="IPR025747">
    <property type="entry name" value="ThiC-associated_dom"/>
</dbReference>
<dbReference type="InterPro" id="IPR038521">
    <property type="entry name" value="ThiC/Bza_core_dom"/>
</dbReference>
<dbReference type="InterPro" id="IPR002817">
    <property type="entry name" value="ThiC/BzaA/B"/>
</dbReference>
<dbReference type="NCBIfam" id="NF006763">
    <property type="entry name" value="PRK09284.1"/>
    <property type="match status" value="1"/>
</dbReference>
<dbReference type="NCBIfam" id="NF009895">
    <property type="entry name" value="PRK13352.1"/>
    <property type="match status" value="1"/>
</dbReference>
<dbReference type="NCBIfam" id="TIGR00190">
    <property type="entry name" value="thiC"/>
    <property type="match status" value="1"/>
</dbReference>
<dbReference type="PANTHER" id="PTHR30557:SF1">
    <property type="entry name" value="PHOSPHOMETHYLPYRIMIDINE SYNTHASE, CHLOROPLASTIC"/>
    <property type="match status" value="1"/>
</dbReference>
<dbReference type="PANTHER" id="PTHR30557">
    <property type="entry name" value="THIAMINE BIOSYNTHESIS PROTEIN THIC"/>
    <property type="match status" value="1"/>
</dbReference>
<dbReference type="Pfam" id="PF13667">
    <property type="entry name" value="ThiC-associated"/>
    <property type="match status" value="1"/>
</dbReference>
<dbReference type="Pfam" id="PF01964">
    <property type="entry name" value="ThiC_Rad_SAM"/>
    <property type="match status" value="1"/>
</dbReference>
<dbReference type="SFLD" id="SFLDF00407">
    <property type="entry name" value="phosphomethylpyrimidine_syntha"/>
    <property type="match status" value="1"/>
</dbReference>
<dbReference type="SFLD" id="SFLDG01114">
    <property type="entry name" value="phosphomethylpyrimidine_syntha"/>
    <property type="match status" value="1"/>
</dbReference>
<dbReference type="SFLD" id="SFLDS00113">
    <property type="entry name" value="Radical_SAM_Phosphomethylpyrim"/>
    <property type="match status" value="1"/>
</dbReference>